<keyword id="KW-0067">ATP-binding</keyword>
<keyword id="KW-0547">Nucleotide-binding</keyword>
<keyword id="KW-0548">Nucleotidyltransferase</keyword>
<keyword id="KW-1185">Reference proteome</keyword>
<keyword id="KW-0808">Transferase</keyword>
<organism>
    <name type="scientific">Methylobacterium nodulans (strain LMG 21967 / CNCM I-2342 / ORS 2060)</name>
    <dbReference type="NCBI Taxonomy" id="460265"/>
    <lineage>
        <taxon>Bacteria</taxon>
        <taxon>Pseudomonadati</taxon>
        <taxon>Pseudomonadota</taxon>
        <taxon>Alphaproteobacteria</taxon>
        <taxon>Hyphomicrobiales</taxon>
        <taxon>Methylobacteriaceae</taxon>
        <taxon>Methylobacterium</taxon>
    </lineage>
</organism>
<name>CYSD_METNO</name>
<comment type="function">
    <text evidence="1">With CysN forms the ATP sulfurylase (ATPS) that catalyzes the adenylation of sulfate producing adenosine 5'-phosphosulfate (APS) and diphosphate, the first enzymatic step in sulfur assimilation pathway. APS synthesis involves the formation of a high-energy phosphoric-sulfuric acid anhydride bond driven by GTP hydrolysis by CysN coupled to ATP hydrolysis by CysD.</text>
</comment>
<comment type="catalytic activity">
    <reaction evidence="1">
        <text>sulfate + ATP + H(+) = adenosine 5'-phosphosulfate + diphosphate</text>
        <dbReference type="Rhea" id="RHEA:18133"/>
        <dbReference type="ChEBI" id="CHEBI:15378"/>
        <dbReference type="ChEBI" id="CHEBI:16189"/>
        <dbReference type="ChEBI" id="CHEBI:30616"/>
        <dbReference type="ChEBI" id="CHEBI:33019"/>
        <dbReference type="ChEBI" id="CHEBI:58243"/>
        <dbReference type="EC" id="2.7.7.4"/>
    </reaction>
</comment>
<comment type="pathway">
    <text evidence="1">Sulfur metabolism; hydrogen sulfide biosynthesis; sulfite from sulfate: step 1/3.</text>
</comment>
<comment type="subunit">
    <text evidence="1">Heterodimer composed of CysD, the smaller subunit, and CysN.</text>
</comment>
<comment type="similarity">
    <text evidence="1">Belongs to the PAPS reductase family. CysD subfamily.</text>
</comment>
<evidence type="ECO:0000255" key="1">
    <source>
        <dbReference type="HAMAP-Rule" id="MF_00064"/>
    </source>
</evidence>
<accession>B8IRX8</accession>
<reference key="1">
    <citation type="submission" date="2009-01" db="EMBL/GenBank/DDBJ databases">
        <title>Complete sequence of chromosome of Methylobacterium nodulans ORS 2060.</title>
        <authorList>
            <consortium name="US DOE Joint Genome Institute"/>
            <person name="Lucas S."/>
            <person name="Copeland A."/>
            <person name="Lapidus A."/>
            <person name="Glavina del Rio T."/>
            <person name="Dalin E."/>
            <person name="Tice H."/>
            <person name="Bruce D."/>
            <person name="Goodwin L."/>
            <person name="Pitluck S."/>
            <person name="Sims D."/>
            <person name="Brettin T."/>
            <person name="Detter J.C."/>
            <person name="Han C."/>
            <person name="Larimer F."/>
            <person name="Land M."/>
            <person name="Hauser L."/>
            <person name="Kyrpides N."/>
            <person name="Ivanova N."/>
            <person name="Marx C.J."/>
            <person name="Richardson P."/>
        </authorList>
    </citation>
    <scope>NUCLEOTIDE SEQUENCE [LARGE SCALE GENOMIC DNA]</scope>
    <source>
        <strain>LMG 21967 / CNCM I-2342 / ORS 2060</strain>
    </source>
</reference>
<feature type="chain" id="PRO_1000117945" description="Sulfate adenylyltransferase subunit 2">
    <location>
        <begin position="1"/>
        <end position="312"/>
    </location>
</feature>
<proteinExistence type="inferred from homology"/>
<gene>
    <name evidence="1" type="primary">cysD</name>
    <name type="ordered locus">Mnod_1800</name>
</gene>
<protein>
    <recommendedName>
        <fullName evidence="1">Sulfate adenylyltransferase subunit 2</fullName>
        <ecNumber evidence="1">2.7.7.4</ecNumber>
    </recommendedName>
    <alternativeName>
        <fullName evidence="1">ATP-sulfurylase small subunit</fullName>
    </alternativeName>
    <alternativeName>
        <fullName evidence="1">Sulfate adenylate transferase</fullName>
        <shortName evidence="1">SAT</shortName>
    </alternativeName>
</protein>
<sequence>MSAALKPLAQLDTPRLTHLQRLEAESIHIMRETVAETENPVMLYSIGKDSSVLLHLALKAFAPGRLPFPLLHVDTTWKFREMIAFRDARAKELGLDLLVYTNPDGLARGIGPVSHGSEVHTDVMKTQALRQALDKYKFDAAFGGARRDEEASRAKERIVSLRTAQHRWDPKRQRAEPWHLYNLKKKRGESLRVFPLSNWTELDIWLYIEQERIPIVPLYFSAERPVVRRDGQLIMVDDERLPLEPGETPELRKVRFRTLGCYPLTGAVESDAATLPEIIGETLAARTSERQGRVIDKDGAGAMERKKQEGYF</sequence>
<dbReference type="EC" id="2.7.7.4" evidence="1"/>
<dbReference type="EMBL" id="CP001349">
    <property type="protein sequence ID" value="ACL56790.1"/>
    <property type="molecule type" value="Genomic_DNA"/>
</dbReference>
<dbReference type="RefSeq" id="WP_015928482.1">
    <property type="nucleotide sequence ID" value="NC_011894.1"/>
</dbReference>
<dbReference type="SMR" id="B8IRX8"/>
<dbReference type="STRING" id="460265.Mnod_1800"/>
<dbReference type="KEGG" id="mno:Mnod_1800"/>
<dbReference type="eggNOG" id="COG0175">
    <property type="taxonomic scope" value="Bacteria"/>
</dbReference>
<dbReference type="HOGENOM" id="CLU_043026_0_0_5"/>
<dbReference type="OrthoDB" id="9772604at2"/>
<dbReference type="UniPathway" id="UPA00140">
    <property type="reaction ID" value="UER00204"/>
</dbReference>
<dbReference type="Proteomes" id="UP000008207">
    <property type="component" value="Chromosome"/>
</dbReference>
<dbReference type="GO" id="GO:0005524">
    <property type="term" value="F:ATP binding"/>
    <property type="evidence" value="ECO:0007669"/>
    <property type="project" value="UniProtKB-KW"/>
</dbReference>
<dbReference type="GO" id="GO:0004781">
    <property type="term" value="F:sulfate adenylyltransferase (ATP) activity"/>
    <property type="evidence" value="ECO:0007669"/>
    <property type="project" value="UniProtKB-UniRule"/>
</dbReference>
<dbReference type="GO" id="GO:0070814">
    <property type="term" value="P:hydrogen sulfide biosynthetic process"/>
    <property type="evidence" value="ECO:0007669"/>
    <property type="project" value="UniProtKB-UniRule"/>
</dbReference>
<dbReference type="GO" id="GO:0000103">
    <property type="term" value="P:sulfate assimilation"/>
    <property type="evidence" value="ECO:0007669"/>
    <property type="project" value="UniProtKB-UniRule"/>
</dbReference>
<dbReference type="CDD" id="cd23946">
    <property type="entry name" value="Sulfate_adenylyltransferase_2"/>
    <property type="match status" value="1"/>
</dbReference>
<dbReference type="FunFam" id="3.40.50.620:FF:000002">
    <property type="entry name" value="Sulfate adenylyltransferase subunit 2"/>
    <property type="match status" value="1"/>
</dbReference>
<dbReference type="Gene3D" id="3.40.50.620">
    <property type="entry name" value="HUPs"/>
    <property type="match status" value="1"/>
</dbReference>
<dbReference type="HAMAP" id="MF_00064">
    <property type="entry name" value="Sulf_adenylyltr_sub2"/>
    <property type="match status" value="1"/>
</dbReference>
<dbReference type="InterPro" id="IPR002500">
    <property type="entry name" value="PAPS_reduct_dom"/>
</dbReference>
<dbReference type="InterPro" id="IPR014729">
    <property type="entry name" value="Rossmann-like_a/b/a_fold"/>
</dbReference>
<dbReference type="InterPro" id="IPR011784">
    <property type="entry name" value="SO4_adenylTrfase_ssu"/>
</dbReference>
<dbReference type="InterPro" id="IPR050128">
    <property type="entry name" value="Sulfate_adenylyltrnsfr_sub2"/>
</dbReference>
<dbReference type="NCBIfam" id="TIGR02039">
    <property type="entry name" value="CysD"/>
    <property type="match status" value="1"/>
</dbReference>
<dbReference type="NCBIfam" id="NF003587">
    <property type="entry name" value="PRK05253.1"/>
    <property type="match status" value="1"/>
</dbReference>
<dbReference type="NCBIfam" id="NF009214">
    <property type="entry name" value="PRK12563.1"/>
    <property type="match status" value="1"/>
</dbReference>
<dbReference type="PANTHER" id="PTHR43196">
    <property type="entry name" value="SULFATE ADENYLYLTRANSFERASE SUBUNIT 2"/>
    <property type="match status" value="1"/>
</dbReference>
<dbReference type="PANTHER" id="PTHR43196:SF1">
    <property type="entry name" value="SULFATE ADENYLYLTRANSFERASE SUBUNIT 2"/>
    <property type="match status" value="1"/>
</dbReference>
<dbReference type="Pfam" id="PF01507">
    <property type="entry name" value="PAPS_reduct"/>
    <property type="match status" value="1"/>
</dbReference>
<dbReference type="PIRSF" id="PIRSF002936">
    <property type="entry name" value="CysDAde_trans"/>
    <property type="match status" value="1"/>
</dbReference>
<dbReference type="SUPFAM" id="SSF52402">
    <property type="entry name" value="Adenine nucleotide alpha hydrolases-like"/>
    <property type="match status" value="1"/>
</dbReference>